<feature type="chain" id="PRO_0000185190" description="Keratin-associated protein 9-4">
    <location>
        <begin position="1"/>
        <end position="154"/>
    </location>
</feature>
<feature type="repeat" description="1">
    <location>
        <begin position="8"/>
        <end position="12"/>
    </location>
</feature>
<feature type="repeat" description="2">
    <location>
        <begin position="13"/>
        <end position="17"/>
    </location>
</feature>
<feature type="repeat" description="3">
    <location>
        <begin position="18"/>
        <end position="22"/>
    </location>
</feature>
<feature type="repeat" description="4">
    <location>
        <begin position="37"/>
        <end position="41"/>
    </location>
</feature>
<feature type="repeat" description="5">
    <location>
        <begin position="42"/>
        <end position="46"/>
    </location>
</feature>
<feature type="repeat" description="6">
    <location>
        <begin position="51"/>
        <end position="55"/>
    </location>
</feature>
<feature type="repeat" description="7">
    <location>
        <begin position="56"/>
        <end position="60"/>
    </location>
</feature>
<feature type="repeat" description="8">
    <location>
        <begin position="61"/>
        <end position="65"/>
    </location>
</feature>
<feature type="repeat" description="9">
    <location>
        <begin position="70"/>
        <end position="74"/>
    </location>
</feature>
<feature type="repeat" description="10">
    <location>
        <begin position="75"/>
        <end position="79"/>
    </location>
</feature>
<feature type="repeat" description="11">
    <location>
        <begin position="80"/>
        <end position="84"/>
    </location>
</feature>
<feature type="repeat" description="12">
    <location>
        <begin position="85"/>
        <end position="89"/>
    </location>
</feature>
<feature type="repeat" description="13">
    <location>
        <begin position="129"/>
        <end position="133"/>
    </location>
</feature>
<feature type="repeat" description="14">
    <location>
        <begin position="134"/>
        <end position="138"/>
    </location>
</feature>
<feature type="repeat" description="15">
    <location>
        <begin position="148"/>
        <end position="152"/>
    </location>
</feature>
<feature type="region of interest" description="15 X 5 AA repeats of C-C-[RQVGE]-[SPTN]-[TASPF]">
    <location>
        <begin position="8"/>
        <end position="152"/>
    </location>
</feature>
<feature type="sequence variant" id="VAR_060242" description="In dbSNP:rs2191379." evidence="1 2">
    <original>S</original>
    <variation>Y</variation>
    <location>
        <position position="146"/>
    </location>
</feature>
<accession>Q9BYQ2</accession>
<accession>Q0VAE3</accession>
<protein>
    <recommendedName>
        <fullName>Keratin-associated protein 9-4</fullName>
    </recommendedName>
    <alternativeName>
        <fullName>Keratin-associated protein 9.4</fullName>
    </alternativeName>
    <alternativeName>
        <fullName>Ultrahigh sulfur keratin-associated protein 9.4</fullName>
    </alternativeName>
</protein>
<organism>
    <name type="scientific">Homo sapiens</name>
    <name type="common">Human</name>
    <dbReference type="NCBI Taxonomy" id="9606"/>
    <lineage>
        <taxon>Eukaryota</taxon>
        <taxon>Metazoa</taxon>
        <taxon>Chordata</taxon>
        <taxon>Craniata</taxon>
        <taxon>Vertebrata</taxon>
        <taxon>Euteleostomi</taxon>
        <taxon>Mammalia</taxon>
        <taxon>Eutheria</taxon>
        <taxon>Euarchontoglires</taxon>
        <taxon>Primates</taxon>
        <taxon>Haplorrhini</taxon>
        <taxon>Catarrhini</taxon>
        <taxon>Hominidae</taxon>
        <taxon>Homo</taxon>
    </lineage>
</organism>
<name>KRA94_HUMAN</name>
<gene>
    <name type="primary">KRTAP9-4</name>
    <name type="synonym">KAP9.4</name>
    <name type="synonym">KRTAP9.4</name>
</gene>
<dbReference type="EMBL" id="AJ406948">
    <property type="protein sequence ID" value="CAC27587.1"/>
    <property type="molecule type" value="mRNA"/>
</dbReference>
<dbReference type="EMBL" id="AC006070">
    <property type="status" value="NOT_ANNOTATED_CDS"/>
    <property type="molecule type" value="Genomic_DNA"/>
</dbReference>
<dbReference type="EMBL" id="BC121094">
    <property type="protein sequence ID" value="AAI21095.1"/>
    <property type="molecule type" value="mRNA"/>
</dbReference>
<dbReference type="CCDS" id="CCDS11386.1"/>
<dbReference type="RefSeq" id="NP_149461.2">
    <property type="nucleotide sequence ID" value="NM_033191.2"/>
</dbReference>
<dbReference type="BioGRID" id="124444">
    <property type="interactions" value="32"/>
</dbReference>
<dbReference type="FunCoup" id="Q9BYQ2">
    <property type="interactions" value="10"/>
</dbReference>
<dbReference type="IntAct" id="Q9BYQ2">
    <property type="interactions" value="28"/>
</dbReference>
<dbReference type="STRING" id="9606.ENSP00000334922"/>
<dbReference type="BioMuta" id="KRTAP9-4"/>
<dbReference type="DMDM" id="296434558"/>
<dbReference type="MassIVE" id="Q9BYQ2"/>
<dbReference type="PaxDb" id="9606-ENSP00000334922"/>
<dbReference type="PeptideAtlas" id="Q9BYQ2"/>
<dbReference type="Antibodypedia" id="81663">
    <property type="antibodies" value="1 antibodies from 1 providers"/>
</dbReference>
<dbReference type="DNASU" id="85280"/>
<dbReference type="Ensembl" id="ENST00000334109.3">
    <property type="protein sequence ID" value="ENSP00000334922.2"/>
    <property type="gene ID" value="ENSG00000241595.2"/>
</dbReference>
<dbReference type="Ensembl" id="ENST00000570861.2">
    <property type="protein sequence ID" value="ENSP00000461634.1"/>
    <property type="gene ID" value="ENSG00000262896.2"/>
</dbReference>
<dbReference type="Ensembl" id="ENST00000575341.2">
    <property type="protein sequence ID" value="ENSP00000461584.1"/>
    <property type="gene ID" value="ENSG00000262512.2"/>
</dbReference>
<dbReference type="GeneID" id="85280"/>
<dbReference type="KEGG" id="hsa:85280"/>
<dbReference type="MANE-Select" id="ENST00000334109.3">
    <property type="protein sequence ID" value="ENSP00000334922.2"/>
    <property type="RefSeq nucleotide sequence ID" value="NM_033191.3"/>
    <property type="RefSeq protein sequence ID" value="NP_149461.2"/>
</dbReference>
<dbReference type="UCSC" id="uc002hwi.3">
    <property type="organism name" value="human"/>
</dbReference>
<dbReference type="AGR" id="HGNC:18902"/>
<dbReference type="CTD" id="85280"/>
<dbReference type="GeneCards" id="KRTAP9-4"/>
<dbReference type="HGNC" id="HGNC:18902">
    <property type="gene designation" value="KRTAP9-4"/>
</dbReference>
<dbReference type="HPA" id="ENSG00000241595">
    <property type="expression patterns" value="Tissue enriched (skin)"/>
</dbReference>
<dbReference type="neXtProt" id="NX_Q9BYQ2"/>
<dbReference type="OpenTargets" id="ENSG00000241595"/>
<dbReference type="PharmGKB" id="PA38750"/>
<dbReference type="VEuPathDB" id="HostDB:ENSG00000241595"/>
<dbReference type="eggNOG" id="KOG4726">
    <property type="taxonomic scope" value="Eukaryota"/>
</dbReference>
<dbReference type="GeneTree" id="ENSGT00940000156135"/>
<dbReference type="HOGENOM" id="CLU_113141_2_0_1"/>
<dbReference type="InParanoid" id="Q9BYQ2"/>
<dbReference type="OMA" id="AGAKCES"/>
<dbReference type="PAN-GO" id="Q9BYQ2">
    <property type="GO annotations" value="0 GO annotations based on evolutionary models"/>
</dbReference>
<dbReference type="PhylomeDB" id="Q9BYQ2"/>
<dbReference type="TreeFam" id="TF351356"/>
<dbReference type="PathwayCommons" id="Q9BYQ2"/>
<dbReference type="Reactome" id="R-HSA-6805567">
    <property type="pathway name" value="Keratinization"/>
</dbReference>
<dbReference type="SignaLink" id="Q9BYQ2"/>
<dbReference type="BioGRID-ORCS" id="85280">
    <property type="hits" value="386 hits in 1039 CRISPR screens"/>
</dbReference>
<dbReference type="GenomeRNAi" id="85280"/>
<dbReference type="Pharos" id="Q9BYQ2">
    <property type="development level" value="Tdark"/>
</dbReference>
<dbReference type="PRO" id="PR:Q9BYQ2"/>
<dbReference type="Proteomes" id="UP000005640">
    <property type="component" value="Chromosome 17"/>
</dbReference>
<dbReference type="RNAct" id="Q9BYQ2">
    <property type="molecule type" value="protein"/>
</dbReference>
<dbReference type="Bgee" id="ENSG00000241595">
    <property type="expression patterns" value="Expressed in skin of abdomen and 15 other cell types or tissues"/>
</dbReference>
<dbReference type="GO" id="GO:0005829">
    <property type="term" value="C:cytosol"/>
    <property type="evidence" value="ECO:0000304"/>
    <property type="project" value="Reactome"/>
</dbReference>
<dbReference type="GO" id="GO:0045095">
    <property type="term" value="C:keratin filament"/>
    <property type="evidence" value="ECO:0007669"/>
    <property type="project" value="InterPro"/>
</dbReference>
<dbReference type="InterPro" id="IPR002494">
    <property type="entry name" value="KAP"/>
</dbReference>
<dbReference type="Pfam" id="PF13885">
    <property type="entry name" value="Keratin_B2_2"/>
    <property type="match status" value="3"/>
</dbReference>
<evidence type="ECO:0000269" key="1">
    <source>
    </source>
</evidence>
<evidence type="ECO:0000269" key="2">
    <source>
    </source>
</evidence>
<evidence type="ECO:0000305" key="3"/>
<reference key="1">
    <citation type="journal article" date="2001" name="J. Biol. Chem.">
        <title>Characterization of a cluster of human high/ultrahigh sulfur keratin-associated protein genes embedded in the type I keratin gene domain on chromosome 17q12-21.</title>
        <authorList>
            <person name="Rogers M.A."/>
            <person name="Langbein L."/>
            <person name="Winter H."/>
            <person name="Ehmann C."/>
            <person name="Praetzel S."/>
            <person name="Korn B."/>
            <person name="Schweizer J."/>
        </authorList>
    </citation>
    <scope>NUCLEOTIDE SEQUENCE [MRNA]</scope>
    <scope>VARIANT TYR-146</scope>
    <source>
        <tissue>Scalp</tissue>
    </source>
</reference>
<reference key="2">
    <citation type="journal article" date="2006" name="Nature">
        <title>DNA sequence of human chromosome 17 and analysis of rearrangement in the human lineage.</title>
        <authorList>
            <person name="Zody M.C."/>
            <person name="Garber M."/>
            <person name="Adams D.J."/>
            <person name="Sharpe T."/>
            <person name="Harrow J."/>
            <person name="Lupski J.R."/>
            <person name="Nicholson C."/>
            <person name="Searle S.M."/>
            <person name="Wilming L."/>
            <person name="Young S.K."/>
            <person name="Abouelleil A."/>
            <person name="Allen N.R."/>
            <person name="Bi W."/>
            <person name="Bloom T."/>
            <person name="Borowsky M.L."/>
            <person name="Bugalter B.E."/>
            <person name="Butler J."/>
            <person name="Chang J.L."/>
            <person name="Chen C.-K."/>
            <person name="Cook A."/>
            <person name="Corum B."/>
            <person name="Cuomo C.A."/>
            <person name="de Jong P.J."/>
            <person name="DeCaprio D."/>
            <person name="Dewar K."/>
            <person name="FitzGerald M."/>
            <person name="Gilbert J."/>
            <person name="Gibson R."/>
            <person name="Gnerre S."/>
            <person name="Goldstein S."/>
            <person name="Grafham D.V."/>
            <person name="Grocock R."/>
            <person name="Hafez N."/>
            <person name="Hagopian D.S."/>
            <person name="Hart E."/>
            <person name="Norman C.H."/>
            <person name="Humphray S."/>
            <person name="Jaffe D.B."/>
            <person name="Jones M."/>
            <person name="Kamal M."/>
            <person name="Khodiyar V.K."/>
            <person name="LaButti K."/>
            <person name="Laird G."/>
            <person name="Lehoczky J."/>
            <person name="Liu X."/>
            <person name="Lokyitsang T."/>
            <person name="Loveland J."/>
            <person name="Lui A."/>
            <person name="Macdonald P."/>
            <person name="Major J.E."/>
            <person name="Matthews L."/>
            <person name="Mauceli E."/>
            <person name="McCarroll S.A."/>
            <person name="Mihalev A.H."/>
            <person name="Mudge J."/>
            <person name="Nguyen C."/>
            <person name="Nicol R."/>
            <person name="O'Leary S.B."/>
            <person name="Osoegawa K."/>
            <person name="Schwartz D.C."/>
            <person name="Shaw-Smith C."/>
            <person name="Stankiewicz P."/>
            <person name="Steward C."/>
            <person name="Swarbreck D."/>
            <person name="Venkataraman V."/>
            <person name="Whittaker C.A."/>
            <person name="Yang X."/>
            <person name="Zimmer A.R."/>
            <person name="Bradley A."/>
            <person name="Hubbard T."/>
            <person name="Birren B.W."/>
            <person name="Rogers J."/>
            <person name="Lander E.S."/>
            <person name="Nusbaum C."/>
        </authorList>
    </citation>
    <scope>NUCLEOTIDE SEQUENCE [LARGE SCALE GENOMIC DNA]</scope>
</reference>
<reference key="3">
    <citation type="journal article" date="2004" name="Genome Res.">
        <title>The status, quality, and expansion of the NIH full-length cDNA project: the Mammalian Gene Collection (MGC).</title>
        <authorList>
            <consortium name="The MGC Project Team"/>
        </authorList>
    </citation>
    <scope>NUCLEOTIDE SEQUENCE [LARGE SCALE MRNA]</scope>
    <scope>VARIANT TYR-146</scope>
</reference>
<sequence length="154" mass="16378">MTHCCSPCCQPTCCRTTCCRTTCWKPTTVTTCSSTPCCQPSCCVSSCCQPCCRPTCCQNTCCQPTCVTSCCQPSCCSTPCCQPTCCGSSCDQSSSCAPVYCRRTCYYPTTVCLPGCLNQSCGSNCCQPCCRPACCETTCFQPTCVSSCCQPFCC</sequence>
<keyword id="KW-0416">Keratin</keyword>
<keyword id="KW-1267">Proteomics identification</keyword>
<keyword id="KW-1185">Reference proteome</keyword>
<keyword id="KW-0677">Repeat</keyword>
<proteinExistence type="evidence at protein level"/>
<comment type="function">
    <text>In the hair cortex, hair keratin intermediate filaments are embedded in an interfilamentous matrix, consisting of hair keratin-associated proteins (KRTAP), which are essential for the formation of a rigid and resistant hair shaft through their extensive disulfide bond cross-linking with abundant cysteine residues of hair keratins. The matrix proteins include the high-sulfur and high-glycine-tyrosine keratins.</text>
</comment>
<comment type="subunit">
    <text>Interacts with hair keratins.</text>
</comment>
<comment type="interaction">
    <interactant intactId="EBI-10185730">
        <id>Q9BYQ2</id>
    </interactant>
    <interactant intactId="EBI-10173507">
        <id>Q6UY14-3</id>
        <label>ADAMTSL4</label>
    </interactant>
    <organismsDiffer>false</organismsDiffer>
    <experiments>3</experiments>
</comment>
<comment type="interaction">
    <interactant intactId="EBI-10185730">
        <id>Q9BYQ2</id>
    </interactant>
    <interactant intactId="EBI-744545">
        <id>Q8NEC5</id>
        <label>CATSPER1</label>
    </interactant>
    <organismsDiffer>false</organismsDiffer>
    <experiments>3</experiments>
</comment>
<comment type="interaction">
    <interactant intactId="EBI-10185730">
        <id>Q9BYQ2</id>
    </interactant>
    <interactant intactId="EBI-10192698">
        <id>Q02930-3</id>
        <label>CREB5</label>
    </interactant>
    <organismsDiffer>false</organismsDiffer>
    <experiments>5</experiments>
</comment>
<comment type="interaction">
    <interactant intactId="EBI-10185730">
        <id>Q9BYQ2</id>
    </interactant>
    <interactant intactId="EBI-1051531">
        <id>Q6P158</id>
        <label>DHX57</label>
    </interactant>
    <organismsDiffer>false</organismsDiffer>
    <experiments>3</experiments>
</comment>
<comment type="interaction">
    <interactant intactId="EBI-10185730">
        <id>Q9BYQ2</id>
    </interactant>
    <interactant intactId="EBI-10252144">
        <id>Q6P158-2</id>
        <label>DHX57</label>
    </interactant>
    <organismsDiffer>false</organismsDiffer>
    <experiments>3</experiments>
</comment>
<comment type="interaction">
    <interactant intactId="EBI-10185730">
        <id>Q9BYQ2</id>
    </interactant>
    <interactant intactId="EBI-448771">
        <id>Q92608</id>
        <label>DOCK2</label>
    </interactant>
    <organismsDiffer>false</organismsDiffer>
    <experiments>3</experiments>
</comment>
<comment type="interaction">
    <interactant intactId="EBI-10185730">
        <id>Q9BYQ2</id>
    </interactant>
    <interactant intactId="EBI-741068">
        <id>Q969U6</id>
        <label>FBXW5</label>
    </interactant>
    <organismsDiffer>false</organismsDiffer>
    <experiments>3</experiments>
</comment>
<comment type="interaction">
    <interactant intactId="EBI-10185730">
        <id>Q9BYQ2</id>
    </interactant>
    <interactant intactId="EBI-740785">
        <id>P49639</id>
        <label>HOXA1</label>
    </interactant>
    <organismsDiffer>false</organismsDiffer>
    <experiments>3</experiments>
</comment>
<comment type="interaction">
    <interactant intactId="EBI-10185730">
        <id>Q9BYQ2</id>
    </interactant>
    <interactant intactId="EBI-10172150">
        <id>P60370</id>
        <label>KRTAP10-5</label>
    </interactant>
    <organismsDiffer>false</organismsDiffer>
    <experiments>5</experiments>
</comment>
<comment type="interaction">
    <interactant intactId="EBI-10185730">
        <id>Q9BYQ2</id>
    </interactant>
    <interactant intactId="EBI-10171774">
        <id>P60410</id>
        <label>KRTAP10-8</label>
    </interactant>
    <organismsDiffer>false</organismsDiffer>
    <experiments>3</experiments>
</comment>
<comment type="interaction">
    <interactant intactId="EBI-10185730">
        <id>Q9BYQ2</id>
    </interactant>
    <interactant intactId="EBI-10172052">
        <id>P60411</id>
        <label>KRTAP10-9</label>
    </interactant>
    <organismsDiffer>false</organismsDiffer>
    <experiments>3</experiments>
</comment>
<comment type="interaction">
    <interactant intactId="EBI-10185730">
        <id>Q9BYQ2</id>
    </interactant>
    <interactant intactId="EBI-10172511">
        <id>Q9BYR5</id>
        <label>KRTAP4-2</label>
    </interactant>
    <organismsDiffer>false</organismsDiffer>
    <experiments>3</experiments>
</comment>
<comment type="interaction">
    <interactant intactId="EBI-10185730">
        <id>Q9BYQ2</id>
    </interactant>
    <interactant intactId="EBI-10250562">
        <id>Q6L8G9</id>
        <label>KRTAP5-6</label>
    </interactant>
    <organismsDiffer>false</organismsDiffer>
    <experiments>3</experiments>
</comment>
<comment type="interaction">
    <interactant intactId="EBI-10185730">
        <id>Q9BYQ2</id>
    </interactant>
    <interactant intactId="EBI-3958099">
        <id>P26371</id>
        <label>KRTAP5-9</label>
    </interactant>
    <organismsDiffer>false</organismsDiffer>
    <experiments>3</experiments>
</comment>
<comment type="interaction">
    <interactant intactId="EBI-10185730">
        <id>Q9BYQ2</id>
    </interactant>
    <interactant intactId="EBI-1044640">
        <id>Q9BYQ4</id>
        <label>KRTAP9-2</label>
    </interactant>
    <organismsDiffer>false</organismsDiffer>
    <experiments>3</experiments>
</comment>
<comment type="interaction">
    <interactant intactId="EBI-10185730">
        <id>Q9BYQ2</id>
    </interactant>
    <interactant intactId="EBI-10245913">
        <id>Q5T7P3</id>
        <label>LCE1B</label>
    </interactant>
    <organismsDiffer>false</organismsDiffer>
    <experiments>4</experiments>
</comment>
<comment type="interaction">
    <interactant intactId="EBI-10185730">
        <id>Q9BYQ2</id>
    </interactant>
    <interactant intactId="EBI-10245291">
        <id>Q5T5A8</id>
        <label>LCE3C</label>
    </interactant>
    <organismsDiffer>false</organismsDiffer>
    <experiments>3</experiments>
</comment>
<comment type="interaction">
    <interactant intactId="EBI-10185730">
        <id>Q9BYQ2</id>
    </interactant>
    <interactant intactId="EBI-10245456">
        <id>Q5T5B0</id>
        <label>LCE3E</label>
    </interactant>
    <organismsDiffer>false</organismsDiffer>
    <experiments>3</experiments>
</comment>
<comment type="interaction">
    <interactant intactId="EBI-10185730">
        <id>Q9BYQ2</id>
    </interactant>
    <interactant intactId="EBI-10246358">
        <id>Q5TA78</id>
        <label>LCE4A</label>
    </interactant>
    <organismsDiffer>false</organismsDiffer>
    <experiments>3</experiments>
</comment>
<comment type="interaction">
    <interactant intactId="EBI-10185730">
        <id>Q9BYQ2</id>
    </interactant>
    <interactant intactId="EBI-947402">
        <id>O60336</id>
        <label>MAPKBP1</label>
    </interactant>
    <organismsDiffer>false</organismsDiffer>
    <experiments>3</experiments>
</comment>
<comment type="interaction">
    <interactant intactId="EBI-10185730">
        <id>Q9BYQ2</id>
    </interactant>
    <interactant intactId="EBI-945833">
        <id>Q7Z3S9</id>
        <label>NOTCH2NLA</label>
    </interactant>
    <organismsDiffer>false</organismsDiffer>
    <experiments>3</experiments>
</comment>
<comment type="interaction">
    <interactant intactId="EBI-10185730">
        <id>Q9BYQ2</id>
    </interactant>
    <interactant intactId="EBI-741158">
        <id>Q96HA8</id>
        <label>NTAQ1</label>
    </interactant>
    <organismsDiffer>false</organismsDiffer>
    <experiments>3</experiments>
</comment>
<comment type="interaction">
    <interactant intactId="EBI-10185730">
        <id>Q9BYQ2</id>
    </interactant>
    <interactant intactId="EBI-1210753">
        <id>Q7Z417</id>
        <label>NUFIP2</label>
    </interactant>
    <organismsDiffer>false</organismsDiffer>
    <experiments>3</experiments>
</comment>
<comment type="interaction">
    <interactant intactId="EBI-10185730">
        <id>Q9BYQ2</id>
    </interactant>
    <interactant intactId="EBI-740446">
        <id>P32242</id>
        <label>OTX1</label>
    </interactant>
    <organismsDiffer>false</organismsDiffer>
    <experiments>5</experiments>
</comment>
<comment type="interaction">
    <interactant intactId="EBI-10185730">
        <id>Q9BYQ2</id>
    </interactant>
    <interactant intactId="EBI-1053424">
        <id>O43741</id>
        <label>PRKAB2</label>
    </interactant>
    <organismsDiffer>false</organismsDiffer>
    <experiments>3</experiments>
</comment>
<comment type="interaction">
    <interactant intactId="EBI-10185730">
        <id>Q9BYQ2</id>
    </interactant>
    <interactant intactId="EBI-307352">
        <id>Q04864</id>
        <label>REL</label>
    </interactant>
    <organismsDiffer>false</organismsDiffer>
    <experiments>3</experiments>
</comment>
<comment type="interaction">
    <interactant intactId="EBI-10185730">
        <id>Q9BYQ2</id>
    </interactant>
    <interactant intactId="EBI-750494">
        <id>P49901</id>
        <label>SMCP</label>
    </interactant>
    <organismsDiffer>false</organismsDiffer>
    <experiments>3</experiments>
</comment>
<comment type="interaction">
    <interactant intactId="EBI-10185730">
        <id>Q9BYQ2</id>
    </interactant>
    <interactant intactId="EBI-742487">
        <id>O43597</id>
        <label>SPRY2</label>
    </interactant>
    <organismsDiffer>false</organismsDiffer>
    <experiments>3</experiments>
</comment>
<comment type="interaction">
    <interactant intactId="EBI-10185730">
        <id>Q9BYQ2</id>
    </interactant>
    <interactant intactId="EBI-743787">
        <id>Q9GZM5</id>
        <label>YIPF3</label>
    </interactant>
    <organismsDiffer>false</organismsDiffer>
    <experiments>3</experiments>
</comment>
<comment type="similarity">
    <text evidence="3">Belongs to the KRTAP type 9 family.</text>
</comment>